<sequence>MQRLGPFSTLYGRVLAPLPGRAGGAASGGGGNSWGVLGSHVQPPGRAQFGVGSTSTSSGDANSVCPAPSTMSKAEEAKKLAGRAAVENHVRNNQVLGIGSGSTIVHAVQRIAERVKQENLNLICIPTSFQARQLILQHGLTLSDLDRHPEIDLAIDGADEVDADLNLIKGGGGCLTQEKIVAGNASRFIVIADFRKDSKNLGDQWHKGIPIEVIPMAYVPVSRTVTQKFGGVIELRMAVNKAGPVVTDNGNFILDWKFDRVHKWSEVNTAITMIPGVVDTGLFINMAERVYFGMQDGSVNMREKPF</sequence>
<comment type="catalytic activity">
    <reaction evidence="1">
        <text>aldehydo-D-ribose 5-phosphate = D-ribulose 5-phosphate</text>
        <dbReference type="Rhea" id="RHEA:14657"/>
        <dbReference type="ChEBI" id="CHEBI:58121"/>
        <dbReference type="ChEBI" id="CHEBI:58273"/>
        <dbReference type="EC" id="5.3.1.6"/>
    </reaction>
</comment>
<comment type="pathway">
    <text evidence="1">Carbohydrate degradation; pentose phosphate pathway; D-ribose 5-phosphate from D-ribulose 5-phosphate (non-oxidative stage): step 1/1.</text>
</comment>
<comment type="similarity">
    <text evidence="2">Belongs to the ribose 5-phosphate isomerase family.</text>
</comment>
<keyword id="KW-0413">Isomerase</keyword>
<keyword id="KW-0597">Phosphoprotein</keyword>
<keyword id="KW-1185">Reference proteome</keyword>
<evidence type="ECO:0000250" key="1">
    <source>
        <dbReference type="UniProtKB" id="P49247"/>
    </source>
</evidence>
<evidence type="ECO:0000255" key="2"/>
<evidence type="ECO:0000256" key="3">
    <source>
        <dbReference type="SAM" id="MobiDB-lite"/>
    </source>
</evidence>
<evidence type="ECO:0000312" key="4">
    <source>
        <dbReference type="EMBL" id="ABM98101.1"/>
    </source>
</evidence>
<protein>
    <recommendedName>
        <fullName>Ribose-5-phosphate isomerase</fullName>
        <ecNumber>5.3.1.6</ecNumber>
    </recommendedName>
    <alternativeName>
        <fullName>Phosphoriboisomerase</fullName>
    </alternativeName>
</protein>
<accession>A2TLM1</accession>
<reference evidence="4" key="1">
    <citation type="submission" date="2007-01" db="EMBL/GenBank/DDBJ databases">
        <title>Differential expression of RPIA in oocyte and follicular cells.</title>
        <authorList>
            <person name="Kim Y.S."/>
            <person name="Yoon S.J."/>
            <person name="Lee H.T."/>
            <person name="Lee K.A."/>
        </authorList>
    </citation>
    <scope>NUCLEOTIDE SEQUENCE [MRNA]</scope>
    <source>
        <tissue evidence="4">Oocyte</tissue>
    </source>
</reference>
<dbReference type="EC" id="5.3.1.6"/>
<dbReference type="EMBL" id="EF213106">
    <property type="protein sequence ID" value="ABM98101.1"/>
    <property type="molecule type" value="mRNA"/>
</dbReference>
<dbReference type="RefSeq" id="NP_001090964.1">
    <property type="nucleotide sequence ID" value="NM_001097495.1"/>
</dbReference>
<dbReference type="SMR" id="A2TLM1"/>
<dbReference type="FunCoup" id="A2TLM1">
    <property type="interactions" value="1690"/>
</dbReference>
<dbReference type="STRING" id="9823.ENSSSCP00000008762"/>
<dbReference type="PaxDb" id="9823-ENSSSCP00000008762"/>
<dbReference type="PeptideAtlas" id="A2TLM1"/>
<dbReference type="GeneID" id="100038014"/>
<dbReference type="KEGG" id="ssc:100038014"/>
<dbReference type="CTD" id="22934"/>
<dbReference type="eggNOG" id="KOG3075">
    <property type="taxonomic scope" value="Eukaryota"/>
</dbReference>
<dbReference type="InParanoid" id="A2TLM1"/>
<dbReference type="OrthoDB" id="1555531at2759"/>
<dbReference type="UniPathway" id="UPA00115">
    <property type="reaction ID" value="UER00412"/>
</dbReference>
<dbReference type="Proteomes" id="UP000008227">
    <property type="component" value="Unplaced"/>
</dbReference>
<dbReference type="Proteomes" id="UP000314985">
    <property type="component" value="Unplaced"/>
</dbReference>
<dbReference type="Proteomes" id="UP000694570">
    <property type="component" value="Unplaced"/>
</dbReference>
<dbReference type="Proteomes" id="UP000694571">
    <property type="component" value="Unplaced"/>
</dbReference>
<dbReference type="Proteomes" id="UP000694720">
    <property type="component" value="Unplaced"/>
</dbReference>
<dbReference type="Proteomes" id="UP000694722">
    <property type="component" value="Unplaced"/>
</dbReference>
<dbReference type="Proteomes" id="UP000694723">
    <property type="component" value="Unplaced"/>
</dbReference>
<dbReference type="Proteomes" id="UP000694724">
    <property type="component" value="Unplaced"/>
</dbReference>
<dbReference type="Proteomes" id="UP000694725">
    <property type="component" value="Unplaced"/>
</dbReference>
<dbReference type="Proteomes" id="UP000694726">
    <property type="component" value="Unplaced"/>
</dbReference>
<dbReference type="Proteomes" id="UP000694727">
    <property type="component" value="Unplaced"/>
</dbReference>
<dbReference type="Proteomes" id="UP000694728">
    <property type="component" value="Unplaced"/>
</dbReference>
<dbReference type="GO" id="GO:0005737">
    <property type="term" value="C:cytoplasm"/>
    <property type="evidence" value="ECO:0000318"/>
    <property type="project" value="GO_Central"/>
</dbReference>
<dbReference type="GO" id="GO:0004751">
    <property type="term" value="F:ribose-5-phosphate isomerase activity"/>
    <property type="evidence" value="ECO:0000318"/>
    <property type="project" value="GO_Central"/>
</dbReference>
<dbReference type="GO" id="GO:0006014">
    <property type="term" value="P:D-ribose metabolic process"/>
    <property type="evidence" value="ECO:0000318"/>
    <property type="project" value="GO_Central"/>
</dbReference>
<dbReference type="GO" id="GO:0009052">
    <property type="term" value="P:pentose-phosphate shunt, non-oxidative branch"/>
    <property type="evidence" value="ECO:0000318"/>
    <property type="project" value="GO_Central"/>
</dbReference>
<dbReference type="CDD" id="cd01398">
    <property type="entry name" value="RPI_A"/>
    <property type="match status" value="1"/>
</dbReference>
<dbReference type="FunFam" id="3.40.50.1360:FF:000013">
    <property type="entry name" value="Ribose 5-phosphate isomerase A"/>
    <property type="match status" value="1"/>
</dbReference>
<dbReference type="FunFam" id="3.30.70.260:FF:000018">
    <property type="entry name" value="Ribose-5-phosphate isomerase A"/>
    <property type="match status" value="1"/>
</dbReference>
<dbReference type="Gene3D" id="3.30.70.260">
    <property type="match status" value="1"/>
</dbReference>
<dbReference type="Gene3D" id="3.40.50.1360">
    <property type="match status" value="1"/>
</dbReference>
<dbReference type="HAMAP" id="MF_00170">
    <property type="entry name" value="Rib_5P_isom_A"/>
    <property type="match status" value="1"/>
</dbReference>
<dbReference type="InterPro" id="IPR037171">
    <property type="entry name" value="NagB/RpiA_transferase-like"/>
</dbReference>
<dbReference type="InterPro" id="IPR020672">
    <property type="entry name" value="Ribose5P_isomerase_typA_subgr"/>
</dbReference>
<dbReference type="InterPro" id="IPR004788">
    <property type="entry name" value="Ribose5P_isomerase_type_A"/>
</dbReference>
<dbReference type="NCBIfam" id="NF001924">
    <property type="entry name" value="PRK00702.1"/>
    <property type="match status" value="1"/>
</dbReference>
<dbReference type="NCBIfam" id="TIGR00021">
    <property type="entry name" value="rpiA"/>
    <property type="match status" value="1"/>
</dbReference>
<dbReference type="PANTHER" id="PTHR11934">
    <property type="entry name" value="RIBOSE-5-PHOSPHATE ISOMERASE"/>
    <property type="match status" value="1"/>
</dbReference>
<dbReference type="PANTHER" id="PTHR11934:SF0">
    <property type="entry name" value="RIBOSE-5-PHOSPHATE ISOMERASE"/>
    <property type="match status" value="1"/>
</dbReference>
<dbReference type="Pfam" id="PF06026">
    <property type="entry name" value="Rib_5-P_isom_A"/>
    <property type="match status" value="1"/>
</dbReference>
<dbReference type="SUPFAM" id="SSF75445">
    <property type="entry name" value="D-ribose-5-phosphate isomerase (RpiA), lid domain"/>
    <property type="match status" value="1"/>
</dbReference>
<dbReference type="SUPFAM" id="SSF100950">
    <property type="entry name" value="NagB/RpiA/CoA transferase-like"/>
    <property type="match status" value="1"/>
</dbReference>
<feature type="chain" id="PRO_0000296297" description="Ribose-5-phosphate isomerase">
    <location>
        <begin position="1"/>
        <end position="306"/>
    </location>
</feature>
<feature type="region of interest" description="Disordered" evidence="3">
    <location>
        <begin position="45"/>
        <end position="68"/>
    </location>
</feature>
<feature type="compositionally biased region" description="Polar residues" evidence="3">
    <location>
        <begin position="51"/>
        <end position="61"/>
    </location>
</feature>
<feature type="modified residue" description="Phosphoserine" evidence="1">
    <location>
        <position position="102"/>
    </location>
</feature>
<proteinExistence type="evidence at transcript level"/>
<name>RPIA_PIG</name>
<organism>
    <name type="scientific">Sus scrofa</name>
    <name type="common">Pig</name>
    <dbReference type="NCBI Taxonomy" id="9823"/>
    <lineage>
        <taxon>Eukaryota</taxon>
        <taxon>Metazoa</taxon>
        <taxon>Chordata</taxon>
        <taxon>Craniata</taxon>
        <taxon>Vertebrata</taxon>
        <taxon>Euteleostomi</taxon>
        <taxon>Mammalia</taxon>
        <taxon>Eutheria</taxon>
        <taxon>Laurasiatheria</taxon>
        <taxon>Artiodactyla</taxon>
        <taxon>Suina</taxon>
        <taxon>Suidae</taxon>
        <taxon>Sus</taxon>
    </lineage>
</organism>
<gene>
    <name evidence="1" type="primary">RPIA</name>
</gene>